<proteinExistence type="evidence at protein level"/>
<organism>
    <name type="scientific">Drosophila mauritiana</name>
    <name type="common">Fruit fly</name>
    <dbReference type="NCBI Taxonomy" id="7226"/>
    <lineage>
        <taxon>Eukaryota</taxon>
        <taxon>Metazoa</taxon>
        <taxon>Ecdysozoa</taxon>
        <taxon>Arthropoda</taxon>
        <taxon>Hexapoda</taxon>
        <taxon>Insecta</taxon>
        <taxon>Pterygota</taxon>
        <taxon>Neoptera</taxon>
        <taxon>Endopterygota</taxon>
        <taxon>Diptera</taxon>
        <taxon>Brachycera</taxon>
        <taxon>Muscomorpha</taxon>
        <taxon>Ephydroidea</taxon>
        <taxon>Drosophilidae</taxon>
        <taxon>Drosophila</taxon>
        <taxon>Sophophora</taxon>
    </lineage>
</organism>
<comment type="function">
    <text evidence="1">Mediates transposition of transposon Mos1 by a 'cut and paste' mechanism. Transposases are sequence-specific nucleases and strand transferases that catalyze transposition through an ordered series of events: sequence-specific binding of transposase to the terminal inverted repeats (IR) present at each end of the transposon, pairing of the transposon IRs in a paired-end complex (PEC), cleavage of one or both DNA strands at each transposon end, capture of target DNA, and strand transfer to insert the transposon at a new site.</text>
</comment>
<comment type="cofactor">
    <cofactor>
        <name>Mg(2+)</name>
        <dbReference type="ChEBI" id="CHEBI:18420"/>
    </cofactor>
    <cofactor>
        <name>Mn(2+)</name>
        <dbReference type="ChEBI" id="CHEBI:29035"/>
    </cofactor>
    <text>Binds 2 divalent metal cations per subunit. Magnesium or manganese.</text>
</comment>
<comment type="subunit">
    <text evidence="1">Homodimer. The complex has a trans arrangement, with each transposon end recognized by the DNA binding region of one transposase monomer and by the active site of the other monomer.</text>
</comment>
<comment type="subcellular location">
    <subcellularLocation>
        <location evidence="2">Nucleus</location>
    </subcellularLocation>
</comment>
<feature type="chain" id="PRO_0000386644" description="Mariner Mos1 transposase">
    <location>
        <begin position="1"/>
        <end position="345"/>
    </location>
</feature>
<feature type="DNA-binding region" description="H-T-H motif">
    <location>
        <begin position="24"/>
        <end position="55"/>
    </location>
</feature>
<feature type="DNA-binding region" description="H-T-H motif">
    <location>
        <begin position="89"/>
        <end position="110"/>
    </location>
</feature>
<feature type="region of interest" description="DNA-binding">
    <location>
        <begin position="1"/>
        <end position="112"/>
    </location>
</feature>
<feature type="region of interest" description="Linker">
    <location>
        <begin position="113"/>
        <end position="125"/>
    </location>
</feature>
<feature type="region of interest" description="Catalytic">
    <location>
        <begin position="126"/>
        <end position="345"/>
    </location>
</feature>
<feature type="binding site">
    <location>
        <position position="156"/>
    </location>
    <ligand>
        <name>Mg(2+)</name>
        <dbReference type="ChEBI" id="CHEBI:18420"/>
        <label>1</label>
    </ligand>
</feature>
<feature type="binding site">
    <location>
        <position position="156"/>
    </location>
    <ligand>
        <name>Mg(2+)</name>
        <dbReference type="ChEBI" id="CHEBI:18420"/>
        <label>2</label>
    </ligand>
</feature>
<feature type="binding site">
    <location>
        <position position="249"/>
    </location>
    <ligand>
        <name>Mg(2+)</name>
        <dbReference type="ChEBI" id="CHEBI:18420"/>
        <label>1</label>
    </ligand>
</feature>
<feature type="binding site">
    <location>
        <position position="284"/>
    </location>
    <ligand>
        <name>Mg(2+)</name>
        <dbReference type="ChEBI" id="CHEBI:18420"/>
        <label>2</label>
    </ligand>
</feature>
<feature type="site" description="Important for base-specific DNA-binding">
    <location>
        <position position="48"/>
    </location>
</feature>
<feature type="site" description="Important for base-specific DNA-binding">
    <location>
        <position position="100"/>
    </location>
</feature>
<feature type="site" description="Important for base-specific DNA-binding">
    <location>
        <position position="118"/>
    </location>
</feature>
<feature type="site" description="Critical for target DNA recognition">
    <location>
        <position position="186"/>
    </location>
</feature>
<feature type="site" description="Important for target DNA recognition and for strand transfer activity">
    <location>
        <position position="186"/>
    </location>
</feature>
<feature type="site" description="Important for base-specific DNA-binding">
    <location>
        <position position="293"/>
    </location>
</feature>
<feature type="mutagenesis site" description="Loss of DNA binding; when associated with R-100.">
    <original>R</original>
    <variation>Q</variation>
    <location>
        <position position="48"/>
    </location>
</feature>
<feature type="mutagenesis site" description="Loss of DNA binding; when associated with Q-48.">
    <original>Q</original>
    <variation>R</variation>
    <location>
        <position position="100"/>
    </location>
</feature>
<feature type="mutagenesis site" description="Reduces rate of second strand cleavage; when associated with A-216.">
    <original>R</original>
    <variation>A</variation>
    <location>
        <position position="118"/>
    </location>
</feature>
<feature type="mutagenesis site" description="Alters cleavage sites in second strand cleavage.">
    <original>W</original>
    <variation>P</variation>
    <location>
        <position position="119"/>
    </location>
</feature>
<feature type="mutagenesis site" description="No effect on second strand cleavage. Strongly reduced strand transfer activity.">
    <original>R</original>
    <variation>A</variation>
    <location>
        <position position="186"/>
    </location>
</feature>
<feature type="mutagenesis site" description="Reduces rate of second strand cleavage; when associated with A-118.">
    <original>T</original>
    <variation>A</variation>
    <location>
        <position position="216"/>
    </location>
</feature>
<feature type="mutagenesis site" description="Loss of catalytic activity.">
    <original>D</original>
    <variation>A</variation>
    <location>
        <position position="284"/>
    </location>
</feature>
<feature type="sequence conflict" description="In Ref. 2; AAA28701." evidence="2" ref="2">
    <original>I</original>
    <variation>L</variation>
    <location>
        <position position="152"/>
    </location>
</feature>
<feature type="sequence conflict" description="In Ref. 2; AAA28698/AAA28699/AAA28700/AAA28701/AAA28702/AAA28703." evidence="2" ref="2">
    <original>S</original>
    <variation>N</variation>
    <location>
        <position position="164"/>
    </location>
</feature>
<feature type="sequence conflict" description="In Ref. 2; AAA28698/AAA28699/AAA28700/AAA28701/AAA28702/AAA28703." evidence="2" ref="2">
    <original>R</original>
    <variation>P</variation>
    <location>
        <position position="210"/>
    </location>
</feature>
<feature type="sequence conflict" description="In Ref. 2; AAA28703." evidence="2" ref="2">
    <original>R</original>
    <variation>K</variation>
    <location>
        <position position="243"/>
    </location>
</feature>
<feature type="sequence conflict" description="In Ref. 2; AAA28703." evidence="2" ref="2">
    <original>HD</original>
    <variation>YG</variation>
    <location>
        <begin position="248"/>
        <end position="249"/>
    </location>
</feature>
<feature type="sequence conflict" description="In Ref. 2; AAA28703." evidence="2" ref="2">
    <original>R</original>
    <variation>C</variation>
    <location>
        <position position="260"/>
    </location>
</feature>
<feature type="helix" evidence="6">
    <location>
        <begin position="8"/>
        <end position="20"/>
    </location>
</feature>
<feature type="helix" evidence="6">
    <location>
        <begin position="25"/>
        <end position="35"/>
    </location>
</feature>
<feature type="helix" evidence="7">
    <location>
        <begin position="37"/>
        <end position="39"/>
    </location>
</feature>
<feature type="helix" evidence="6">
    <location>
        <begin position="43"/>
        <end position="55"/>
    </location>
</feature>
<feature type="helix" evidence="6">
    <location>
        <begin position="74"/>
        <end position="83"/>
    </location>
</feature>
<feature type="helix" evidence="6">
    <location>
        <begin position="89"/>
        <end position="95"/>
    </location>
</feature>
<feature type="helix" evidence="6">
    <location>
        <begin position="100"/>
        <end position="109"/>
    </location>
</feature>
<feature type="strand" evidence="6">
    <location>
        <begin position="113"/>
        <end position="116"/>
    </location>
</feature>
<feature type="strand" evidence="6">
    <location>
        <begin position="119"/>
        <end position="121"/>
    </location>
</feature>
<feature type="helix" evidence="4">
    <location>
        <begin position="126"/>
        <end position="145"/>
    </location>
</feature>
<feature type="helix" evidence="4">
    <location>
        <begin position="149"/>
        <end position="151"/>
    </location>
</feature>
<feature type="strand" evidence="4">
    <location>
        <begin position="152"/>
        <end position="161"/>
    </location>
</feature>
<feature type="strand" evidence="6">
    <location>
        <begin position="169"/>
        <end position="172"/>
    </location>
</feature>
<feature type="strand" evidence="3">
    <location>
        <begin position="174"/>
        <end position="176"/>
    </location>
</feature>
<feature type="strand" evidence="4">
    <location>
        <begin position="190"/>
        <end position="198"/>
    </location>
</feature>
<feature type="strand" evidence="4">
    <location>
        <begin position="201"/>
        <end position="207"/>
    </location>
</feature>
<feature type="helix" evidence="4">
    <location>
        <begin position="216"/>
        <end position="233"/>
    </location>
</feature>
<feature type="helix" evidence="4">
    <location>
        <begin position="235"/>
        <end position="238"/>
    </location>
</feature>
<feature type="strand" evidence="4">
    <location>
        <begin position="245"/>
        <end position="247"/>
    </location>
</feature>
<feature type="helix" evidence="4">
    <location>
        <begin position="252"/>
        <end position="255"/>
    </location>
</feature>
<feature type="helix" evidence="4">
    <location>
        <begin position="257"/>
        <end position="266"/>
    </location>
</feature>
<feature type="strand" evidence="5">
    <location>
        <begin position="268"/>
        <end position="270"/>
    </location>
</feature>
<feature type="helix" evidence="4">
    <location>
        <begin position="278"/>
        <end position="280"/>
    </location>
</feature>
<feature type="helix" evidence="4">
    <location>
        <begin position="282"/>
        <end position="285"/>
    </location>
</feature>
<feature type="helix" evidence="4">
    <location>
        <begin position="287"/>
        <end position="295"/>
    </location>
</feature>
<feature type="helix" evidence="4">
    <location>
        <begin position="303"/>
        <end position="316"/>
    </location>
</feature>
<feature type="helix" evidence="4">
    <location>
        <begin position="319"/>
        <end position="327"/>
    </location>
</feature>
<feature type="helix" evidence="4">
    <location>
        <begin position="329"/>
        <end position="338"/>
    </location>
</feature>
<feature type="turn" evidence="4">
    <location>
        <begin position="339"/>
        <end position="341"/>
    </location>
</feature>
<evidence type="ECO:0000269" key="1">
    <source>
    </source>
</evidence>
<evidence type="ECO:0000305" key="2"/>
<evidence type="ECO:0007829" key="3">
    <source>
        <dbReference type="PDB" id="3HOT"/>
    </source>
</evidence>
<evidence type="ECO:0007829" key="4">
    <source>
        <dbReference type="PDB" id="4MDA"/>
    </source>
</evidence>
<evidence type="ECO:0007829" key="5">
    <source>
        <dbReference type="PDB" id="4R79"/>
    </source>
</evidence>
<evidence type="ECO:0007829" key="6">
    <source>
        <dbReference type="PDB" id="4U7B"/>
    </source>
</evidence>
<evidence type="ECO:0007829" key="7">
    <source>
        <dbReference type="PDB" id="5HOO"/>
    </source>
</evidence>
<reference key="1">
    <citation type="journal article" date="1986" name="Proc. Natl. Acad. Sci. U.S.A.">
        <title>Molecular structure of a somatically unstable transposable element in Drosophila.</title>
        <authorList>
            <person name="Jacobson J.W."/>
            <person name="Medhora M.M."/>
            <person name="Hartl D.L."/>
        </authorList>
    </citation>
    <scope>NUCLEOTIDE SEQUENCE [GENOMIC DNA]</scope>
</reference>
<reference key="2">
    <citation type="journal article" date="1993" name="Nature">
        <title>The mariner transposable element is widespread in insects.</title>
        <authorList>
            <person name="Robertson H.M."/>
        </authorList>
    </citation>
    <scope>NUCLEOTIDE SEQUENCE [GENOMIC DNA] OF 125-275</scope>
</reference>
<reference key="3">
    <citation type="journal article" date="2009" name="Cell">
        <title>Molecular architecture of the Mos1 paired-end complex: the structural basis of DNA transposition in a eukaryote.</title>
        <authorList>
            <person name="Richardson J.M."/>
            <person name="Colloms S.D."/>
            <person name="Finnegan D.J."/>
            <person name="Walkinshaw M.D."/>
        </authorList>
    </citation>
    <scope>X-RAY CRYSTALLOGRAPHY (3.25 ANGSTROMS) OF MUTANT ALA-216 IN COMPLEX WITH INVERTED REPEAT DNA; MAGNESIUM AND MANGANESE IONS</scope>
    <scope>FUNCTION</scope>
    <scope>SUBUNIT</scope>
    <scope>METAL-BINDING SITES</scope>
</reference>
<accession>Q7JQ07</accession>
<accession>Q05407</accession>
<accession>Q05415</accession>
<accession>Q05417</accession>
<name>MOS1T_DROMA</name>
<sequence length="345" mass="40851">MSSFVPNKEQTRTVLIFCFHLKKTAAESHRMLVEAFGEQVPTVKKCERWFQRFKSGDFDVDDKEHGKPPKRYEDAELQALLDEDDAQTQKQLAEQLEVSQQAVSNRLREMGKIQKVGRWVPHELNERQMERRKNTCEILLSRYKRKSFLHRIVTGDEKWIFFVSPKRKKSYVDPGQPATSTARPNRFGKKTMLCVWWDQSGVIYYELLKRGETVNTARYQQQLINLNRALQRKRPEYQKRQHRVIFLHDNAPSHTARAVRDTLETLNWEVLPHAAYSPDLAPSDYHLFASMGHALAEQRFDSYESVKKWLDEWFAAKDDEFYWRGIHKLPERWEKCVASDGKYLE</sequence>
<dbReference type="EC" id="3.1.-.-"/>
<dbReference type="EMBL" id="M14653">
    <property type="protein sequence ID" value="AAA28678.1"/>
    <property type="molecule type" value="Genomic_DNA"/>
</dbReference>
<dbReference type="EMBL" id="L10449">
    <property type="protein sequence ID" value="AAA28698.1"/>
    <property type="molecule type" value="Genomic_DNA"/>
</dbReference>
<dbReference type="EMBL" id="L10450">
    <property type="protein sequence ID" value="AAA28699.1"/>
    <property type="molecule type" value="Genomic_DNA"/>
</dbReference>
<dbReference type="EMBL" id="L10451">
    <property type="protein sequence ID" value="AAA28700.1"/>
    <property type="molecule type" value="Genomic_DNA"/>
</dbReference>
<dbReference type="EMBL" id="L10452">
    <property type="protein sequence ID" value="AAA28701.1"/>
    <property type="molecule type" value="Genomic_DNA"/>
</dbReference>
<dbReference type="EMBL" id="L10453">
    <property type="protein sequence ID" value="AAA28702.1"/>
    <property type="molecule type" value="Genomic_DNA"/>
</dbReference>
<dbReference type="EMBL" id="L10454">
    <property type="protein sequence ID" value="AAA28703.1"/>
    <property type="molecule type" value="Genomic_DNA"/>
</dbReference>
<dbReference type="PIR" id="S36997">
    <property type="entry name" value="S36997"/>
</dbReference>
<dbReference type="PIR" id="S37002">
    <property type="entry name" value="S37002"/>
</dbReference>
<dbReference type="PDB" id="2F7T">
    <property type="method" value="X-ray"/>
    <property type="resolution" value="2.25 A"/>
    <property type="chains" value="A=119-343"/>
</dbReference>
<dbReference type="PDB" id="3HOS">
    <property type="method" value="X-ray"/>
    <property type="resolution" value="3.50 A"/>
    <property type="chains" value="A/B=1-343"/>
</dbReference>
<dbReference type="PDB" id="3HOT">
    <property type="method" value="X-ray"/>
    <property type="resolution" value="3.25 A"/>
    <property type="chains" value="A/B=1-343"/>
</dbReference>
<dbReference type="PDB" id="4MDA">
    <property type="method" value="X-ray"/>
    <property type="resolution" value="1.70 A"/>
    <property type="chains" value="A=121-343"/>
</dbReference>
<dbReference type="PDB" id="4MDB">
    <property type="method" value="X-ray"/>
    <property type="resolution" value="1.70 A"/>
    <property type="chains" value="A=121-343"/>
</dbReference>
<dbReference type="PDB" id="4R79">
    <property type="method" value="X-ray"/>
    <property type="resolution" value="3.10 A"/>
    <property type="chains" value="A/B=1-343"/>
</dbReference>
<dbReference type="PDB" id="4U7B">
    <property type="method" value="X-ray"/>
    <property type="resolution" value="3.09 A"/>
    <property type="chains" value="A/B/G=4-343"/>
</dbReference>
<dbReference type="PDB" id="5HOO">
    <property type="method" value="X-ray"/>
    <property type="resolution" value="3.30 A"/>
    <property type="chains" value="A/B=1-343"/>
</dbReference>
<dbReference type="PDBsum" id="2F7T"/>
<dbReference type="PDBsum" id="3HOS"/>
<dbReference type="PDBsum" id="3HOT"/>
<dbReference type="PDBsum" id="4MDA"/>
<dbReference type="PDBsum" id="4MDB"/>
<dbReference type="PDBsum" id="4R79"/>
<dbReference type="PDBsum" id="4U7B"/>
<dbReference type="PDBsum" id="5HOO"/>
<dbReference type="SMR" id="Q7JQ07"/>
<dbReference type="FlyBase" id="FBgn0013835">
    <property type="gene designation" value="Dmau\mariner\T"/>
</dbReference>
<dbReference type="EvolutionaryTrace" id="Q7JQ07"/>
<dbReference type="Proteomes" id="UP000515162">
    <property type="component" value="Unplaced"/>
</dbReference>
<dbReference type="GO" id="GO:0000793">
    <property type="term" value="C:condensed chromosome"/>
    <property type="evidence" value="ECO:0007669"/>
    <property type="project" value="TreeGrafter"/>
</dbReference>
<dbReference type="GO" id="GO:0005634">
    <property type="term" value="C:nucleus"/>
    <property type="evidence" value="ECO:0007669"/>
    <property type="project" value="UniProtKB-SubCell"/>
</dbReference>
<dbReference type="GO" id="GO:0035861">
    <property type="term" value="C:site of double-strand break"/>
    <property type="evidence" value="ECO:0007669"/>
    <property type="project" value="TreeGrafter"/>
</dbReference>
<dbReference type="GO" id="GO:0044547">
    <property type="term" value="F:DNA topoisomerase binding"/>
    <property type="evidence" value="ECO:0007669"/>
    <property type="project" value="TreeGrafter"/>
</dbReference>
<dbReference type="GO" id="GO:0003690">
    <property type="term" value="F:double-stranded DNA binding"/>
    <property type="evidence" value="ECO:0007669"/>
    <property type="project" value="TreeGrafter"/>
</dbReference>
<dbReference type="GO" id="GO:0046975">
    <property type="term" value="F:histone H3K36 methyltransferase activity"/>
    <property type="evidence" value="ECO:0007669"/>
    <property type="project" value="TreeGrafter"/>
</dbReference>
<dbReference type="GO" id="GO:0042800">
    <property type="term" value="F:histone H3K4 methyltransferase activity"/>
    <property type="evidence" value="ECO:0007669"/>
    <property type="project" value="TreeGrafter"/>
</dbReference>
<dbReference type="GO" id="GO:0046872">
    <property type="term" value="F:metal ion binding"/>
    <property type="evidence" value="ECO:0007669"/>
    <property type="project" value="UniProtKB-KW"/>
</dbReference>
<dbReference type="GO" id="GO:0003697">
    <property type="term" value="F:single-stranded DNA binding"/>
    <property type="evidence" value="ECO:0007669"/>
    <property type="project" value="TreeGrafter"/>
</dbReference>
<dbReference type="GO" id="GO:0000014">
    <property type="term" value="F:single-stranded DNA endodeoxyribonuclease activity"/>
    <property type="evidence" value="ECO:0007669"/>
    <property type="project" value="TreeGrafter"/>
</dbReference>
<dbReference type="GO" id="GO:0000729">
    <property type="term" value="P:DNA double-strand break processing"/>
    <property type="evidence" value="ECO:0007669"/>
    <property type="project" value="TreeGrafter"/>
</dbReference>
<dbReference type="GO" id="GO:0015074">
    <property type="term" value="P:DNA integration"/>
    <property type="evidence" value="ECO:0007669"/>
    <property type="project" value="UniProtKB-KW"/>
</dbReference>
<dbReference type="GO" id="GO:0006310">
    <property type="term" value="P:DNA recombination"/>
    <property type="evidence" value="ECO:0007669"/>
    <property type="project" value="UniProtKB-KW"/>
</dbReference>
<dbReference type="GO" id="GO:0006303">
    <property type="term" value="P:double-strand break repair via nonhomologous end joining"/>
    <property type="evidence" value="ECO:0007669"/>
    <property type="project" value="TreeGrafter"/>
</dbReference>
<dbReference type="GO" id="GO:0044774">
    <property type="term" value="P:mitotic DNA integrity checkpoint signaling"/>
    <property type="evidence" value="ECO:0007669"/>
    <property type="project" value="TreeGrafter"/>
</dbReference>
<dbReference type="GO" id="GO:0031297">
    <property type="term" value="P:replication fork processing"/>
    <property type="evidence" value="ECO:0007669"/>
    <property type="project" value="TreeGrafter"/>
</dbReference>
<dbReference type="Gene3D" id="1.10.10.1450">
    <property type="match status" value="1"/>
</dbReference>
<dbReference type="Gene3D" id="3.30.420.10">
    <property type="entry name" value="Ribonuclease H-like superfamily/Ribonuclease H"/>
    <property type="match status" value="1"/>
</dbReference>
<dbReference type="Gene3D" id="1.10.10.10">
    <property type="entry name" value="Winged helix-like DNA-binding domain superfamily/Winged helix DNA-binding domain"/>
    <property type="match status" value="1"/>
</dbReference>
<dbReference type="IDEAL" id="IID50338"/>
<dbReference type="InterPro" id="IPR041426">
    <property type="entry name" value="Mos1_HTH"/>
</dbReference>
<dbReference type="InterPro" id="IPR036397">
    <property type="entry name" value="RNaseH_sf"/>
</dbReference>
<dbReference type="InterPro" id="IPR052709">
    <property type="entry name" value="Transposase-MT_Hybrid"/>
</dbReference>
<dbReference type="InterPro" id="IPR001888">
    <property type="entry name" value="Transposase_1"/>
</dbReference>
<dbReference type="InterPro" id="IPR036388">
    <property type="entry name" value="WH-like_DNA-bd_sf"/>
</dbReference>
<dbReference type="InterPro" id="IPR036390">
    <property type="entry name" value="WH_DNA-bd_sf"/>
</dbReference>
<dbReference type="PANTHER" id="PTHR46060:SF2">
    <property type="entry name" value="HISTONE-LYSINE N-METHYLTRANSFERASE SETMAR"/>
    <property type="match status" value="1"/>
</dbReference>
<dbReference type="PANTHER" id="PTHR46060">
    <property type="entry name" value="MARINER MOS1 TRANSPOSASE-LIKE PROTEIN"/>
    <property type="match status" value="1"/>
</dbReference>
<dbReference type="Pfam" id="PF17906">
    <property type="entry name" value="HTH_48"/>
    <property type="match status" value="1"/>
</dbReference>
<dbReference type="Pfam" id="PF01359">
    <property type="entry name" value="Transposase_1"/>
    <property type="match status" value="1"/>
</dbReference>
<dbReference type="SUPFAM" id="SSF46785">
    <property type="entry name" value="Winged helix' DNA-binding domain"/>
    <property type="match status" value="1"/>
</dbReference>
<gene>
    <name type="primary">mariner\T</name>
</gene>
<keyword id="KW-0002">3D-structure</keyword>
<keyword id="KW-0229">DNA integration</keyword>
<keyword id="KW-0233">DNA recombination</keyword>
<keyword id="KW-0238">DNA-binding</keyword>
<keyword id="KW-0255">Endonuclease</keyword>
<keyword id="KW-0378">Hydrolase</keyword>
<keyword id="KW-0460">Magnesium</keyword>
<keyword id="KW-0479">Metal-binding</keyword>
<keyword id="KW-0540">Nuclease</keyword>
<keyword id="KW-0539">Nucleus</keyword>
<keyword id="KW-0814">Transposable element</keyword>
<protein>
    <recommendedName>
        <fullName>Mariner Mos1 transposase</fullName>
        <ecNumber>3.1.-.-</ecNumber>
    </recommendedName>
    <alternativeName>
        <fullName>Transposable element Mos1 transposase</fullName>
    </alternativeName>
</protein>